<comment type="function">
    <text evidence="1">This protein is involved in the repair of mismatches in DNA. It is possible that it carries out the mismatch recognition step. This protein has a weak ATPase activity.</text>
</comment>
<comment type="similarity">
    <text evidence="1">Belongs to the DNA mismatch repair MutS family.</text>
</comment>
<keyword id="KW-0067">ATP-binding</keyword>
<keyword id="KW-0227">DNA damage</keyword>
<keyword id="KW-0234">DNA repair</keyword>
<keyword id="KW-0238">DNA-binding</keyword>
<keyword id="KW-0547">Nucleotide-binding</keyword>
<keyword id="KW-1185">Reference proteome</keyword>
<sequence>MHRVMTIHPDIAPPPDLPAPAEPPAKVSPMMEQYHEIKAANPGLLLFYRMGDFYELFFEDAEIASRALGITLTKRGKHQGMDIPMCGVPVERSDDYLHRLIALGHRVAVCEQTEDPAAARARKSVVRRDVVRLITPGTLTEDTLLDARANNYLLAIARARGSSGTDRIGLAWIDISTGEFSVTECATGELSATLARINPNEAIVSDALYSDAELGPSLRELAAVTPLTRDVFDSATAERRLCDYFAVATMDGLAALSRLEAAAAAACVTYVDRTQLGKRPPLSPPSREATGATMAIDPATRANLELTRTLAGERRGSLLDAIDCTVTAAGSRLLAQRLAAPLTDAAAIARRLDAVEVFVVAPALREQIRSALRAAPDMARALARLSLGRGGPRDLASLRDGIVAADQGLQQLSQLTAPPQEIAAAMAALRRPSRDLCDELGRALADDLPLQKRDGGFVRDGYEAALDETRKLRDASRLVVAAMQARYADDTGVKGLKIRHNNVLGYFVEVTAQHGDRLMAPPLNATFIHRQTLAGQVRFTTAELGEIEAKIANAGDRALGLELEIFDRLAALIETAGEDLRAAAHAFALLDVATALAKLASDDNYVRPEVDQSLSFAIEGGRHPVVEQALKRAGEPFIANACDLSPGPAQASGQIWLLTGPNMAGKSTFLRQNALIALLAQTGSYVPAARARIGIVDRLFSRVGAADDLARGRSTFMVEMVETAAILNQATERALVILDEIGRGTATFDGLSIAWAAIEHLHEQNRCRALFATHYHELTALSAKLPRLFNATVRVKEWRGEVVFLHEVLPGSADRSYGIQVAKLAGLPASVVARAKSVLAKLEANDRGQPKALIDDLPLFAITARAPAEPSPPSEAEQLIAAVQALHPDELSPREALDALYALKAKLPKTT</sequence>
<feature type="chain" id="PRO_0000335216" description="DNA mismatch repair protein MutS">
    <location>
        <begin position="1"/>
        <end position="911"/>
    </location>
</feature>
<feature type="binding site" evidence="1">
    <location>
        <begin position="660"/>
        <end position="667"/>
    </location>
    <ligand>
        <name>ATP</name>
        <dbReference type="ChEBI" id="CHEBI:30616"/>
    </ligand>
</feature>
<gene>
    <name evidence="1" type="primary">mutS</name>
    <name type="ordered locus">RPB_0528</name>
</gene>
<accession>Q2J2S1</accession>
<reference key="1">
    <citation type="submission" date="2006-01" db="EMBL/GenBank/DDBJ databases">
        <title>Complete sequence of Rhodopseudomonas palustris HaA2.</title>
        <authorList>
            <consortium name="US DOE Joint Genome Institute"/>
            <person name="Copeland A."/>
            <person name="Lucas S."/>
            <person name="Lapidus A."/>
            <person name="Barry K."/>
            <person name="Detter J.C."/>
            <person name="Glavina T."/>
            <person name="Hammon N."/>
            <person name="Israni S."/>
            <person name="Pitluck S."/>
            <person name="Chain P."/>
            <person name="Malfatti S."/>
            <person name="Shin M."/>
            <person name="Vergez L."/>
            <person name="Schmutz J."/>
            <person name="Larimer F."/>
            <person name="Land M."/>
            <person name="Hauser L."/>
            <person name="Pelletier D.A."/>
            <person name="Kyrpides N."/>
            <person name="Anderson I."/>
            <person name="Oda Y."/>
            <person name="Harwood C.S."/>
            <person name="Richardson P."/>
        </authorList>
    </citation>
    <scope>NUCLEOTIDE SEQUENCE [LARGE SCALE GENOMIC DNA]</scope>
    <source>
        <strain>HaA2</strain>
    </source>
</reference>
<proteinExistence type="inferred from homology"/>
<protein>
    <recommendedName>
        <fullName evidence="1">DNA mismatch repair protein MutS</fullName>
    </recommendedName>
</protein>
<organism>
    <name type="scientific">Rhodopseudomonas palustris (strain HaA2)</name>
    <dbReference type="NCBI Taxonomy" id="316058"/>
    <lineage>
        <taxon>Bacteria</taxon>
        <taxon>Pseudomonadati</taxon>
        <taxon>Pseudomonadota</taxon>
        <taxon>Alphaproteobacteria</taxon>
        <taxon>Hyphomicrobiales</taxon>
        <taxon>Nitrobacteraceae</taxon>
        <taxon>Rhodopseudomonas</taxon>
    </lineage>
</organism>
<name>MUTS_RHOP2</name>
<dbReference type="EMBL" id="CP000250">
    <property type="protein sequence ID" value="ABD05239.1"/>
    <property type="molecule type" value="Genomic_DNA"/>
</dbReference>
<dbReference type="SMR" id="Q2J2S1"/>
<dbReference type="STRING" id="316058.RPB_0528"/>
<dbReference type="KEGG" id="rpb:RPB_0528"/>
<dbReference type="eggNOG" id="COG0249">
    <property type="taxonomic scope" value="Bacteria"/>
</dbReference>
<dbReference type="HOGENOM" id="CLU_002472_4_0_5"/>
<dbReference type="Proteomes" id="UP000008809">
    <property type="component" value="Chromosome"/>
</dbReference>
<dbReference type="GO" id="GO:0005829">
    <property type="term" value="C:cytosol"/>
    <property type="evidence" value="ECO:0007669"/>
    <property type="project" value="TreeGrafter"/>
</dbReference>
<dbReference type="GO" id="GO:0005524">
    <property type="term" value="F:ATP binding"/>
    <property type="evidence" value="ECO:0007669"/>
    <property type="project" value="UniProtKB-UniRule"/>
</dbReference>
<dbReference type="GO" id="GO:0140664">
    <property type="term" value="F:ATP-dependent DNA damage sensor activity"/>
    <property type="evidence" value="ECO:0007669"/>
    <property type="project" value="InterPro"/>
</dbReference>
<dbReference type="GO" id="GO:0003684">
    <property type="term" value="F:damaged DNA binding"/>
    <property type="evidence" value="ECO:0007669"/>
    <property type="project" value="UniProtKB-UniRule"/>
</dbReference>
<dbReference type="GO" id="GO:0030983">
    <property type="term" value="F:mismatched DNA binding"/>
    <property type="evidence" value="ECO:0007669"/>
    <property type="project" value="InterPro"/>
</dbReference>
<dbReference type="GO" id="GO:0006298">
    <property type="term" value="P:mismatch repair"/>
    <property type="evidence" value="ECO:0007669"/>
    <property type="project" value="UniProtKB-UniRule"/>
</dbReference>
<dbReference type="CDD" id="cd03284">
    <property type="entry name" value="ABC_MutS1"/>
    <property type="match status" value="1"/>
</dbReference>
<dbReference type="FunFam" id="3.40.1170.10:FF:000001">
    <property type="entry name" value="DNA mismatch repair protein MutS"/>
    <property type="match status" value="1"/>
</dbReference>
<dbReference type="FunFam" id="3.40.50.300:FF:001579">
    <property type="entry name" value="DNA mismatch repair protein MutS"/>
    <property type="match status" value="1"/>
</dbReference>
<dbReference type="Gene3D" id="1.10.1420.10">
    <property type="match status" value="2"/>
</dbReference>
<dbReference type="Gene3D" id="6.10.140.430">
    <property type="match status" value="1"/>
</dbReference>
<dbReference type="Gene3D" id="3.40.1170.10">
    <property type="entry name" value="DNA repair protein MutS, domain I"/>
    <property type="match status" value="1"/>
</dbReference>
<dbReference type="Gene3D" id="3.30.420.110">
    <property type="entry name" value="MutS, connector domain"/>
    <property type="match status" value="1"/>
</dbReference>
<dbReference type="Gene3D" id="3.40.50.300">
    <property type="entry name" value="P-loop containing nucleotide triphosphate hydrolases"/>
    <property type="match status" value="1"/>
</dbReference>
<dbReference type="HAMAP" id="MF_00096">
    <property type="entry name" value="MutS"/>
    <property type="match status" value="1"/>
</dbReference>
<dbReference type="InterPro" id="IPR005748">
    <property type="entry name" value="DNA_mismatch_repair_MutS"/>
</dbReference>
<dbReference type="InterPro" id="IPR007695">
    <property type="entry name" value="DNA_mismatch_repair_MutS-lik_N"/>
</dbReference>
<dbReference type="InterPro" id="IPR017261">
    <property type="entry name" value="DNA_mismatch_repair_MutS/MSH"/>
</dbReference>
<dbReference type="InterPro" id="IPR000432">
    <property type="entry name" value="DNA_mismatch_repair_MutS_C"/>
</dbReference>
<dbReference type="InterPro" id="IPR007861">
    <property type="entry name" value="DNA_mismatch_repair_MutS_clamp"/>
</dbReference>
<dbReference type="InterPro" id="IPR007696">
    <property type="entry name" value="DNA_mismatch_repair_MutS_core"/>
</dbReference>
<dbReference type="InterPro" id="IPR016151">
    <property type="entry name" value="DNA_mismatch_repair_MutS_N"/>
</dbReference>
<dbReference type="InterPro" id="IPR036187">
    <property type="entry name" value="DNA_mismatch_repair_MutS_sf"/>
</dbReference>
<dbReference type="InterPro" id="IPR007860">
    <property type="entry name" value="DNA_mmatch_repair_MutS_con_dom"/>
</dbReference>
<dbReference type="InterPro" id="IPR045076">
    <property type="entry name" value="MutS"/>
</dbReference>
<dbReference type="InterPro" id="IPR036678">
    <property type="entry name" value="MutS_con_dom_sf"/>
</dbReference>
<dbReference type="InterPro" id="IPR027417">
    <property type="entry name" value="P-loop_NTPase"/>
</dbReference>
<dbReference type="NCBIfam" id="TIGR01070">
    <property type="entry name" value="mutS1"/>
    <property type="match status" value="1"/>
</dbReference>
<dbReference type="NCBIfam" id="NF003810">
    <property type="entry name" value="PRK05399.1"/>
    <property type="match status" value="1"/>
</dbReference>
<dbReference type="PANTHER" id="PTHR11361:SF34">
    <property type="entry name" value="DNA MISMATCH REPAIR PROTEIN MSH1, MITOCHONDRIAL"/>
    <property type="match status" value="1"/>
</dbReference>
<dbReference type="PANTHER" id="PTHR11361">
    <property type="entry name" value="DNA MISMATCH REPAIR PROTEIN MUTS FAMILY MEMBER"/>
    <property type="match status" value="1"/>
</dbReference>
<dbReference type="Pfam" id="PF01624">
    <property type="entry name" value="MutS_I"/>
    <property type="match status" value="1"/>
</dbReference>
<dbReference type="Pfam" id="PF05188">
    <property type="entry name" value="MutS_II"/>
    <property type="match status" value="1"/>
</dbReference>
<dbReference type="Pfam" id="PF05192">
    <property type="entry name" value="MutS_III"/>
    <property type="match status" value="1"/>
</dbReference>
<dbReference type="Pfam" id="PF05190">
    <property type="entry name" value="MutS_IV"/>
    <property type="match status" value="1"/>
</dbReference>
<dbReference type="Pfam" id="PF00488">
    <property type="entry name" value="MutS_V"/>
    <property type="match status" value="1"/>
</dbReference>
<dbReference type="PIRSF" id="PIRSF037677">
    <property type="entry name" value="DNA_mis_repair_Msh6"/>
    <property type="match status" value="1"/>
</dbReference>
<dbReference type="SMART" id="SM00534">
    <property type="entry name" value="MUTSac"/>
    <property type="match status" value="1"/>
</dbReference>
<dbReference type="SMART" id="SM00533">
    <property type="entry name" value="MUTSd"/>
    <property type="match status" value="1"/>
</dbReference>
<dbReference type="SUPFAM" id="SSF55271">
    <property type="entry name" value="DNA repair protein MutS, domain I"/>
    <property type="match status" value="1"/>
</dbReference>
<dbReference type="SUPFAM" id="SSF53150">
    <property type="entry name" value="DNA repair protein MutS, domain II"/>
    <property type="match status" value="1"/>
</dbReference>
<dbReference type="SUPFAM" id="SSF48334">
    <property type="entry name" value="DNA repair protein MutS, domain III"/>
    <property type="match status" value="1"/>
</dbReference>
<dbReference type="SUPFAM" id="SSF52540">
    <property type="entry name" value="P-loop containing nucleoside triphosphate hydrolases"/>
    <property type="match status" value="1"/>
</dbReference>
<dbReference type="PROSITE" id="PS00486">
    <property type="entry name" value="DNA_MISMATCH_REPAIR_2"/>
    <property type="match status" value="1"/>
</dbReference>
<evidence type="ECO:0000255" key="1">
    <source>
        <dbReference type="HAMAP-Rule" id="MF_00096"/>
    </source>
</evidence>